<comment type="subcellular location">
    <subcellularLocation>
        <location evidence="4">Secreted</location>
    </subcellularLocation>
</comment>
<feature type="signal peptide" evidence="1">
    <location>
        <begin position="1"/>
        <end position="24"/>
    </location>
</feature>
<feature type="chain" id="PRO_5003053779" description="PI-PLC X domain-containing protein 1">
    <location>
        <begin position="25"/>
        <end position="305"/>
    </location>
</feature>
<feature type="domain" description="PI-PLC X-box" evidence="2">
    <location>
        <begin position="25"/>
        <end position="189"/>
    </location>
</feature>
<feature type="active site" evidence="2">
    <location>
        <position position="53"/>
    </location>
</feature>
<feature type="active site" evidence="2">
    <location>
        <position position="97"/>
    </location>
</feature>
<feature type="glycosylation site" description="N-linked (GlcNAc...) asparagine" evidence="3">
    <location>
        <position position="237"/>
    </location>
</feature>
<accession>D4AK17</accession>
<sequence>MSMSTLRHFLWLGALLLATIQVSALPTAQDLICNGHPEYCDRRYSELSFVGAHNSPFVGPLLQHNQDISVTEQLDFGIRFLQGQTHKNDDGVFSMCHTSCILEDAGSVSSYLQTVKTWLDSHPNEVVTLLITNGDGLDIKEFDDAFNAVNGIKDYTFAPKSKLALGDWPTLRELITTGKRLIVFVDSKADTNRFPYLLDEFSYYFETPFSTTDENFPQCKLDRPAGGKPDGQMYLVNHTLNVNVFGIFLPDRFKAGRTNAAVGQGSIGAQVDLCNSIYHRKPNVVLLDFITEGDVLKAERTMNGL</sequence>
<dbReference type="EMBL" id="ABSU01000001">
    <property type="protein sequence ID" value="EFE37090.1"/>
    <property type="molecule type" value="Genomic_DNA"/>
</dbReference>
<dbReference type="RefSeq" id="XP_003017735.1">
    <property type="nucleotide sequence ID" value="XM_003017689.1"/>
</dbReference>
<dbReference type="STRING" id="663331.D4AK17"/>
<dbReference type="GeneID" id="9522581"/>
<dbReference type="KEGG" id="abe:ARB_04618"/>
<dbReference type="eggNOG" id="KOG4306">
    <property type="taxonomic scope" value="Eukaryota"/>
</dbReference>
<dbReference type="HOGENOM" id="CLU_037358_2_1_1"/>
<dbReference type="OMA" id="YYFETPF"/>
<dbReference type="OrthoDB" id="7984201at2759"/>
<dbReference type="Proteomes" id="UP000008866">
    <property type="component" value="Unassembled WGS sequence"/>
</dbReference>
<dbReference type="GO" id="GO:0005576">
    <property type="term" value="C:extracellular region"/>
    <property type="evidence" value="ECO:0007669"/>
    <property type="project" value="UniProtKB-SubCell"/>
</dbReference>
<dbReference type="GO" id="GO:0008081">
    <property type="term" value="F:phosphoric diester hydrolase activity"/>
    <property type="evidence" value="ECO:0007669"/>
    <property type="project" value="InterPro"/>
</dbReference>
<dbReference type="GO" id="GO:0016042">
    <property type="term" value="P:lipid catabolic process"/>
    <property type="evidence" value="ECO:0007669"/>
    <property type="project" value="UniProtKB-KW"/>
</dbReference>
<dbReference type="GO" id="GO:0007165">
    <property type="term" value="P:signal transduction"/>
    <property type="evidence" value="ECO:0007669"/>
    <property type="project" value="UniProtKB-KW"/>
</dbReference>
<dbReference type="Gene3D" id="3.20.20.190">
    <property type="entry name" value="Phosphatidylinositol (PI) phosphodiesterase"/>
    <property type="match status" value="1"/>
</dbReference>
<dbReference type="InterPro" id="IPR051057">
    <property type="entry name" value="PI-PLC_domain"/>
</dbReference>
<dbReference type="InterPro" id="IPR017946">
    <property type="entry name" value="PLC-like_Pdiesterase_TIM-brl"/>
</dbReference>
<dbReference type="PANTHER" id="PTHR13593">
    <property type="match status" value="1"/>
</dbReference>
<dbReference type="PANTHER" id="PTHR13593:SF146">
    <property type="entry name" value="PLC-LIKE PHOSPHODIESTERASE"/>
    <property type="match status" value="1"/>
</dbReference>
<dbReference type="SUPFAM" id="SSF51695">
    <property type="entry name" value="PLC-like phosphodiesterases"/>
    <property type="match status" value="1"/>
</dbReference>
<dbReference type="PROSITE" id="PS50007">
    <property type="entry name" value="PIPLC_X_DOMAIN"/>
    <property type="match status" value="1"/>
</dbReference>
<name>PLCX1_ARTBC</name>
<organism>
    <name type="scientific">Arthroderma benhamiae (strain ATCC MYA-4681 / CBS 112371)</name>
    <name type="common">Trichophyton mentagrophytes</name>
    <dbReference type="NCBI Taxonomy" id="663331"/>
    <lineage>
        <taxon>Eukaryota</taxon>
        <taxon>Fungi</taxon>
        <taxon>Dikarya</taxon>
        <taxon>Ascomycota</taxon>
        <taxon>Pezizomycotina</taxon>
        <taxon>Eurotiomycetes</taxon>
        <taxon>Eurotiomycetidae</taxon>
        <taxon>Onygenales</taxon>
        <taxon>Arthrodermataceae</taxon>
        <taxon>Trichophyton</taxon>
    </lineage>
</organism>
<protein>
    <recommendedName>
        <fullName>PI-PLC X domain-containing protein 1</fullName>
    </recommendedName>
</protein>
<reference key="1">
    <citation type="journal article" date="2011" name="Genome Biol.">
        <title>Comparative and functional genomics provide insights into the pathogenicity of dermatophytic fungi.</title>
        <authorList>
            <person name="Burmester A."/>
            <person name="Shelest E."/>
            <person name="Gloeckner G."/>
            <person name="Heddergott C."/>
            <person name="Schindler S."/>
            <person name="Staib P."/>
            <person name="Heidel A."/>
            <person name="Felder M."/>
            <person name="Petzold A."/>
            <person name="Szafranski K."/>
            <person name="Feuermann M."/>
            <person name="Pedruzzi I."/>
            <person name="Priebe S."/>
            <person name="Groth M."/>
            <person name="Winkler R."/>
            <person name="Li W."/>
            <person name="Kniemeyer O."/>
            <person name="Schroeckh V."/>
            <person name="Hertweck C."/>
            <person name="Hube B."/>
            <person name="White T.C."/>
            <person name="Platzer M."/>
            <person name="Guthke R."/>
            <person name="Heitman J."/>
            <person name="Woestemeyer J."/>
            <person name="Zipfel P.F."/>
            <person name="Monod M."/>
            <person name="Brakhage A.A."/>
        </authorList>
    </citation>
    <scope>NUCLEOTIDE SEQUENCE [LARGE SCALE GENOMIC DNA]</scope>
    <source>
        <strain>ATCC MYA-4681 / CBS 112371</strain>
    </source>
</reference>
<reference key="2">
    <citation type="journal article" date="2011" name="Proteomics">
        <title>Identification of novel secreted proteases during extracellular proteolysis by dermatophytes at acidic pH.</title>
        <authorList>
            <person name="Sriranganadane D."/>
            <person name="Waridel P."/>
            <person name="Salamin K."/>
            <person name="Feuermann M."/>
            <person name="Mignon B."/>
            <person name="Staib P."/>
            <person name="Neuhaus J.M."/>
            <person name="Quadroni M."/>
            <person name="Monod M."/>
        </authorList>
    </citation>
    <scope>IDENTIFICATION BY MASS SPECTROMETRY</scope>
    <scope>SUBCELLULAR LOCATION</scope>
</reference>
<evidence type="ECO:0000255" key="1"/>
<evidence type="ECO:0000255" key="2">
    <source>
        <dbReference type="PROSITE-ProRule" id="PRU00270"/>
    </source>
</evidence>
<evidence type="ECO:0000255" key="3">
    <source>
        <dbReference type="PROSITE-ProRule" id="PRU00498"/>
    </source>
</evidence>
<evidence type="ECO:0000269" key="4">
    <source>
    </source>
</evidence>
<keyword id="KW-0325">Glycoprotein</keyword>
<keyword id="KW-0378">Hydrolase</keyword>
<keyword id="KW-0442">Lipid degradation</keyword>
<keyword id="KW-0443">Lipid metabolism</keyword>
<keyword id="KW-1185">Reference proteome</keyword>
<keyword id="KW-0964">Secreted</keyword>
<keyword id="KW-0732">Signal</keyword>
<keyword id="KW-0807">Transducer</keyword>
<gene>
    <name type="ORF">ARB_04618</name>
</gene>
<proteinExistence type="evidence at protein level"/>